<accession>Q7TNN9</accession>
<organism>
    <name type="scientific">Rattus norvegicus</name>
    <name type="common">Rat</name>
    <dbReference type="NCBI Taxonomy" id="10116"/>
    <lineage>
        <taxon>Eukaryota</taxon>
        <taxon>Metazoa</taxon>
        <taxon>Chordata</taxon>
        <taxon>Craniata</taxon>
        <taxon>Vertebrata</taxon>
        <taxon>Euteleostomi</taxon>
        <taxon>Mammalia</taxon>
        <taxon>Eutheria</taxon>
        <taxon>Euarchontoglires</taxon>
        <taxon>Glires</taxon>
        <taxon>Rodentia</taxon>
        <taxon>Myomorpha</taxon>
        <taxon>Muroidea</taxon>
        <taxon>Muridae</taxon>
        <taxon>Murinae</taxon>
        <taxon>Rattus</taxon>
    </lineage>
</organism>
<sequence length="497" mass="54731">MAWNTNLRGRLPITCLILQVTMVVLFGVFVRYDIQADAHWWLEKKRKNISSDVENEFYYRYPSFEDVHAMVFVGFGFLMTYLQRYGFSAVGFNFLLAAFGIQWALLMQGWFHFFEEGHILLSVENLIQADFCVASTCVAFGAVLGKISPMQLLIMTFFQVTLFTVNEFILLNLIEAKDAGGSMTIHTFGAYFGLTVTWILYRKNLEQSKQRQSSVYHSDLFAMIGTLFLWIYWPSFNSASSFHGDTQHRAALNTYLSLAASVLTTVAVSSVIHKKGKLDMVHIQNATLAGGVGVGTAAEMMLTPYGALIVGFFCGILSTLGFAYLSPFLESRLRIQDTCGIHNLHGIPGIIGGIVGAVTAAYSSPDVYGEPGIVHSFGFGGYKADWTKRMQGRSQIFGLLLSLAMALVGGIIVGFILKLPFWGQASDENCFEDAIYWEVPEEVNTVYIPEDLAHKHSTSLVPAIPLVLSTPSASIVPPVPPTPPASLATVTSSSLVH</sequence>
<dbReference type="EMBL" id="AY129073">
    <property type="protein sequence ID" value="AAN07791.1"/>
    <property type="molecule type" value="mRNA"/>
</dbReference>
<dbReference type="RefSeq" id="NP_898876.1">
    <property type="nucleotide sequence ID" value="NM_183053.1"/>
</dbReference>
<dbReference type="SMR" id="Q7TNN9"/>
<dbReference type="FunCoup" id="Q7TNN9">
    <property type="interactions" value="30"/>
</dbReference>
<dbReference type="STRING" id="10116.ENSRNOP00000021109"/>
<dbReference type="GlyCosmos" id="Q7TNN9">
    <property type="glycosylation" value="1 site, No reported glycans"/>
</dbReference>
<dbReference type="GlyGen" id="Q7TNN9">
    <property type="glycosylation" value="2 sites"/>
</dbReference>
<dbReference type="PhosphoSitePlus" id="Q7TNN9"/>
<dbReference type="PaxDb" id="10116-ENSRNOP00000021109"/>
<dbReference type="GeneID" id="293048"/>
<dbReference type="KEGG" id="rno:293048"/>
<dbReference type="UCSC" id="RGD:727859">
    <property type="organism name" value="rat"/>
</dbReference>
<dbReference type="AGR" id="RGD:727859"/>
<dbReference type="CTD" id="51458"/>
<dbReference type="RGD" id="727859">
    <property type="gene designation" value="Rhcg"/>
</dbReference>
<dbReference type="eggNOG" id="KOG3796">
    <property type="taxonomic scope" value="Eukaryota"/>
</dbReference>
<dbReference type="InParanoid" id="Q7TNN9"/>
<dbReference type="PhylomeDB" id="Q7TNN9"/>
<dbReference type="Reactome" id="R-RNO-444411">
    <property type="pathway name" value="Rhesus glycoproteins mediate ammonium transport"/>
</dbReference>
<dbReference type="PRO" id="PR:Q7TNN9"/>
<dbReference type="Proteomes" id="UP000002494">
    <property type="component" value="Unplaced"/>
</dbReference>
<dbReference type="GO" id="GO:0016324">
    <property type="term" value="C:apical plasma membrane"/>
    <property type="evidence" value="ECO:0000314"/>
    <property type="project" value="UniProtKB"/>
</dbReference>
<dbReference type="GO" id="GO:0009925">
    <property type="term" value="C:basal plasma membrane"/>
    <property type="evidence" value="ECO:0000314"/>
    <property type="project" value="RGD"/>
</dbReference>
<dbReference type="GO" id="GO:0016323">
    <property type="term" value="C:basolateral plasma membrane"/>
    <property type="evidence" value="ECO:0000314"/>
    <property type="project" value="UniProtKB"/>
</dbReference>
<dbReference type="GO" id="GO:0031410">
    <property type="term" value="C:cytoplasmic vesicle"/>
    <property type="evidence" value="ECO:0000314"/>
    <property type="project" value="UniProtKB"/>
</dbReference>
<dbReference type="GO" id="GO:0005886">
    <property type="term" value="C:plasma membrane"/>
    <property type="evidence" value="ECO:0000250"/>
    <property type="project" value="UniProtKB"/>
</dbReference>
<dbReference type="GO" id="GO:0008519">
    <property type="term" value="F:ammonium channel activity"/>
    <property type="evidence" value="ECO:0000314"/>
    <property type="project" value="UniProtKB"/>
</dbReference>
<dbReference type="GO" id="GO:0030506">
    <property type="term" value="F:ankyrin binding"/>
    <property type="evidence" value="ECO:0000250"/>
    <property type="project" value="UniProtKB"/>
</dbReference>
<dbReference type="GO" id="GO:0035379">
    <property type="term" value="F:carbon dioxide transmembrane transporter activity"/>
    <property type="evidence" value="ECO:0000250"/>
    <property type="project" value="UniProtKB"/>
</dbReference>
<dbReference type="GO" id="GO:0042802">
    <property type="term" value="F:identical protein binding"/>
    <property type="evidence" value="ECO:0000266"/>
    <property type="project" value="RGD"/>
</dbReference>
<dbReference type="GO" id="GO:0097272">
    <property type="term" value="P:ammonium homeostasis"/>
    <property type="evidence" value="ECO:0000318"/>
    <property type="project" value="GO_Central"/>
</dbReference>
<dbReference type="GO" id="GO:0072488">
    <property type="term" value="P:ammonium transmembrane transport"/>
    <property type="evidence" value="ECO:0000314"/>
    <property type="project" value="UniProtKB"/>
</dbReference>
<dbReference type="GO" id="GO:0006873">
    <property type="term" value="P:intracellular monoatomic ion homeostasis"/>
    <property type="evidence" value="ECO:0000250"/>
    <property type="project" value="UniProtKB"/>
</dbReference>
<dbReference type="GO" id="GO:0006885">
    <property type="term" value="P:regulation of pH"/>
    <property type="evidence" value="ECO:0000266"/>
    <property type="project" value="RGD"/>
</dbReference>
<dbReference type="GO" id="GO:0070634">
    <property type="term" value="P:transepithelial ammonium transport"/>
    <property type="evidence" value="ECO:0000250"/>
    <property type="project" value="UniProtKB"/>
</dbReference>
<dbReference type="FunFam" id="1.10.3430.10:FF:000001">
    <property type="entry name" value="Ammonium transporter Rh type C"/>
    <property type="match status" value="1"/>
</dbReference>
<dbReference type="Gene3D" id="1.10.3430.10">
    <property type="entry name" value="Ammonium transporter AmtB like domains"/>
    <property type="match status" value="1"/>
</dbReference>
<dbReference type="InterPro" id="IPR029020">
    <property type="entry name" value="Ammonium/urea_transptr"/>
</dbReference>
<dbReference type="InterPro" id="IPR024041">
    <property type="entry name" value="NH4_transpt_AmtB-like_dom"/>
</dbReference>
<dbReference type="InterPro" id="IPR002229">
    <property type="entry name" value="RhesusRHD"/>
</dbReference>
<dbReference type="PANTHER" id="PTHR11730">
    <property type="entry name" value="AMMONIUM TRANSPORTER"/>
    <property type="match status" value="1"/>
</dbReference>
<dbReference type="PANTHER" id="PTHR11730:SF30">
    <property type="entry name" value="AMMONIUM TRANSPORTER RH TYPE C"/>
    <property type="match status" value="1"/>
</dbReference>
<dbReference type="Pfam" id="PF00909">
    <property type="entry name" value="Ammonium_transp"/>
    <property type="match status" value="1"/>
</dbReference>
<dbReference type="PRINTS" id="PR00342">
    <property type="entry name" value="RHESUSRHD"/>
</dbReference>
<dbReference type="SUPFAM" id="SSF111352">
    <property type="entry name" value="Ammonium transporter"/>
    <property type="match status" value="1"/>
</dbReference>
<reference key="1">
    <citation type="journal article" date="2005" name="Proc. Natl. Acad. Sci. U.S.A.">
        <title>Evolutionary conservation and diversification of Rh family genes and proteins.</title>
        <authorList>
            <person name="Huang C.-H."/>
            <person name="Peng J."/>
        </authorList>
    </citation>
    <scope>NUCLEOTIDE SEQUENCE [MRNA]</scope>
</reference>
<reference key="2">
    <citation type="journal article" date="2002" name="J. Am. Soc. Nephrol.">
        <title>Expression of RhCG, a new putative NH(3)/NH(4)(+) transporter, along the rat nephron.</title>
        <authorList>
            <person name="Eladari D."/>
            <person name="Cheval L."/>
            <person name="Quentin F."/>
            <person name="Bertrand O."/>
            <person name="Mouro I."/>
            <person name="Cherif-Zahar B."/>
            <person name="Cartron J.-P."/>
            <person name="Paillard M."/>
            <person name="Doucet A."/>
            <person name="Chambrey R."/>
        </authorList>
    </citation>
    <scope>TISSUE SPECIFICITY</scope>
    <scope>SUBCELLULAR LOCATION</scope>
</reference>
<reference key="3">
    <citation type="journal article" date="2003" name="J. Am. Soc. Nephrol.">
        <title>RhBG and RhCG, the putative ammonia transporters, are expressed in the same cells in the distal nephron.</title>
        <authorList>
            <person name="Quentin F."/>
            <person name="Eladari D."/>
            <person name="Cheval L."/>
            <person name="Lopez C."/>
            <person name="Goossens D."/>
            <person name="Colin Y."/>
            <person name="Cartron J.-P."/>
            <person name="Paillard M."/>
            <person name="Chambrey R."/>
        </authorList>
    </citation>
    <scope>SUBCELLULAR LOCATION</scope>
</reference>
<reference key="4">
    <citation type="journal article" date="2006" name="Am. J. Physiol.">
        <title>Changes in subcellular distribution of the ammonia transporter, Rhcg, in response to chronic metabolic acidosis.</title>
        <authorList>
            <person name="Seshadri R.M."/>
            <person name="Klein J.D."/>
            <person name="Smith T."/>
            <person name="Sands J.M."/>
            <person name="Handlogten M.E."/>
            <person name="Verlander J.W."/>
            <person name="Weiner I.D."/>
        </authorList>
    </citation>
    <scope>SUBCELLULAR LOCATION</scope>
</reference>
<feature type="chain" id="PRO_0000283584" description="Ammonium transporter Rh type C">
    <location>
        <begin position="1"/>
        <end position="497"/>
    </location>
</feature>
<feature type="topological domain" description="Cytoplasmic" evidence="3">
    <location>
        <begin position="1"/>
        <end position="9"/>
    </location>
</feature>
<feature type="transmembrane region" description="Helical" evidence="3">
    <location>
        <begin position="10"/>
        <end position="30"/>
    </location>
</feature>
<feature type="topological domain" description="Extracellular" evidence="3">
    <location>
        <begin position="31"/>
        <end position="61"/>
    </location>
</feature>
<feature type="transmembrane region" description="Helical" evidence="3">
    <location>
        <begin position="62"/>
        <end position="82"/>
    </location>
</feature>
<feature type="topological domain" description="Cytoplasmic" evidence="3">
    <location>
        <begin position="83"/>
        <end position="93"/>
    </location>
</feature>
<feature type="transmembrane region" description="Helical" evidence="3">
    <location>
        <begin position="94"/>
        <end position="114"/>
    </location>
</feature>
<feature type="topological domain" description="Extracellular" evidence="3">
    <location>
        <begin position="115"/>
        <end position="125"/>
    </location>
</feature>
<feature type="transmembrane region" description="Helical" evidence="3">
    <location>
        <begin position="126"/>
        <end position="145"/>
    </location>
</feature>
<feature type="topological domain" description="Cytoplasmic" evidence="3">
    <location>
        <begin position="146"/>
        <end position="151"/>
    </location>
</feature>
<feature type="transmembrane region" description="Helical" evidence="3">
    <location>
        <begin position="152"/>
        <end position="174"/>
    </location>
</feature>
<feature type="topological domain" description="Extracellular" evidence="3">
    <location>
        <begin position="175"/>
        <end position="179"/>
    </location>
</feature>
<feature type="transmembrane region" description="Helical" evidence="3">
    <location>
        <begin position="180"/>
        <end position="200"/>
    </location>
</feature>
<feature type="topological domain" description="Cytoplasmic" evidence="3">
    <location>
        <begin position="201"/>
        <end position="219"/>
    </location>
</feature>
<feature type="transmembrane region" description="Helical" evidence="3">
    <location>
        <begin position="220"/>
        <end position="240"/>
    </location>
</feature>
<feature type="topological domain" description="Extracellular" evidence="3">
    <location>
        <begin position="241"/>
        <end position="251"/>
    </location>
</feature>
<feature type="transmembrane region" description="Helical" evidence="3">
    <location>
        <begin position="252"/>
        <end position="272"/>
    </location>
</feature>
<feature type="topological domain" description="Cytoplasmic" evidence="3">
    <location>
        <begin position="273"/>
        <end position="282"/>
    </location>
</feature>
<feature type="transmembrane region" description="Helical" evidence="3">
    <location>
        <begin position="283"/>
        <end position="303"/>
    </location>
</feature>
<feature type="topological domain" description="Extracellular" evidence="3">
    <location>
        <position position="304"/>
    </location>
</feature>
<feature type="transmembrane region" description="Helical" evidence="3">
    <location>
        <begin position="305"/>
        <end position="325"/>
    </location>
</feature>
<feature type="topological domain" description="Cytoplasmic" evidence="3">
    <location>
        <begin position="326"/>
        <end position="340"/>
    </location>
</feature>
<feature type="transmembrane region" description="Helical" evidence="3">
    <location>
        <begin position="341"/>
        <end position="361"/>
    </location>
</feature>
<feature type="topological domain" description="Extracellular" evidence="3">
    <location>
        <begin position="362"/>
        <end position="395"/>
    </location>
</feature>
<feature type="transmembrane region" description="Helical" evidence="3">
    <location>
        <begin position="396"/>
        <end position="416"/>
    </location>
</feature>
<feature type="topological domain" description="Cytoplasmic" evidence="3">
    <location>
        <begin position="417"/>
        <end position="497"/>
    </location>
</feature>
<feature type="glycosylation site" description="N-linked (GlcNAc...) asparagine" evidence="3">
    <location>
        <position position="48"/>
    </location>
</feature>
<comment type="function">
    <text evidence="2">Ammonium transporter involved in the maintenance of acid-base homeostasis. Transports ammonium and its related derivative methylammonium across the plasma membrane of epithelial cells likely contributing to renal transepithelial ammonia transport and ammonia metabolism. Postulated to primarily mediate an electroneutral bidirectional transport of NH3 ammonia species according to a mechanism that implies interaction of an NH4(+) ion with acidic residues of the pore entry followed by dissociation of NH4(+) into NH3 and H(+). As a result NH3 transits through the central pore and is protonated on the extracellular side reforming NH4(+) (By similarity). May act as a CO2 channel providing for renal acid secretion (By similarity).</text>
</comment>
<comment type="catalytic activity">
    <reaction evidence="2">
        <text>NH4(+)(in) = NH4(+)(out)</text>
        <dbReference type="Rhea" id="RHEA:28747"/>
        <dbReference type="ChEBI" id="CHEBI:28938"/>
    </reaction>
    <physiologicalReaction direction="left-to-right" evidence="2">
        <dbReference type="Rhea" id="RHEA:28748"/>
    </physiologicalReaction>
    <physiologicalReaction direction="right-to-left" evidence="2">
        <dbReference type="Rhea" id="RHEA:28749"/>
    </physiologicalReaction>
</comment>
<comment type="catalytic activity">
    <reaction evidence="2">
        <text>methylamine(out) = methylamine(in)</text>
        <dbReference type="Rhea" id="RHEA:74391"/>
        <dbReference type="ChEBI" id="CHEBI:59338"/>
    </reaction>
    <physiologicalReaction direction="left-to-right" evidence="2">
        <dbReference type="Rhea" id="RHEA:74392"/>
    </physiologicalReaction>
</comment>
<comment type="catalytic activity">
    <reaction evidence="2">
        <text>CO2(out) = CO2(in)</text>
        <dbReference type="Rhea" id="RHEA:74891"/>
        <dbReference type="ChEBI" id="CHEBI:16526"/>
    </reaction>
    <physiologicalReaction direction="left-to-right" evidence="2">
        <dbReference type="Rhea" id="RHEA:74892"/>
    </physiologicalReaction>
</comment>
<comment type="subunit">
    <text evidence="2">Homotrimer.</text>
</comment>
<comment type="subcellular location">
    <subcellularLocation>
        <location evidence="2">Cell membrane</location>
        <topology evidence="3">Multi-pass membrane protein</topology>
    </subcellularLocation>
    <subcellularLocation>
        <location evidence="4 5 6">Apical cell membrane</location>
        <topology evidence="3">Multi-pass membrane protein</topology>
    </subcellularLocation>
    <text>Also detected at the basolateral membrane and in subapical vesicles. Chronic acidosis induces relocalization to the apical cell membrane.</text>
</comment>
<comment type="tissue specificity">
    <text evidence="4">Expressed by connecting tubule cells and intercalated cells of the collecting duct in kidney (at protein level).</text>
</comment>
<comment type="PTM">
    <text evidence="1">N-glycosylated.</text>
</comment>
<comment type="similarity">
    <text evidence="7">Belongs to the ammonium transporter (TC 2.A.49) family. Rh subfamily.</text>
</comment>
<evidence type="ECO:0000250" key="1"/>
<evidence type="ECO:0000250" key="2">
    <source>
        <dbReference type="UniProtKB" id="Q9UBD6"/>
    </source>
</evidence>
<evidence type="ECO:0000255" key="3"/>
<evidence type="ECO:0000269" key="4">
    <source>
    </source>
</evidence>
<evidence type="ECO:0000269" key="5">
    <source>
    </source>
</evidence>
<evidence type="ECO:0000269" key="6">
    <source>
    </source>
</evidence>
<evidence type="ECO:0000305" key="7"/>
<protein>
    <recommendedName>
        <fullName>Ammonium transporter Rh type C</fullName>
    </recommendedName>
    <alternativeName>
        <fullName>Rhesus blood group family type C glycoprotein</fullName>
        <shortName>Rh family type C glycoprotein</shortName>
        <shortName>Rh type C glycoprotein</shortName>
    </alternativeName>
</protein>
<name>RHCG_RAT</name>
<keyword id="KW-0924">Ammonia transport</keyword>
<keyword id="KW-1003">Cell membrane</keyword>
<keyword id="KW-0325">Glycoprotein</keyword>
<keyword id="KW-0472">Membrane</keyword>
<keyword id="KW-1185">Reference proteome</keyword>
<keyword id="KW-0812">Transmembrane</keyword>
<keyword id="KW-1133">Transmembrane helix</keyword>
<keyword id="KW-0813">Transport</keyword>
<gene>
    <name type="primary">Rhcg</name>
</gene>
<proteinExistence type="evidence at protein level"/>